<accession>P13730</accession>
<accession>B3NGW3</accession>
<protein>
    <recommendedName>
        <fullName>Salivary glue protein Sgs-3</fullName>
    </recommendedName>
</protein>
<comment type="developmental stage">
    <text>Produced by third-instar larvae.</text>
</comment>
<reference key="1">
    <citation type="journal article" date="1988" name="J. Mol. Biol.">
        <title>Evolution and expression of the Sgs-3 glue gene of Drosophila.</title>
        <authorList>
            <person name="Martin C.H."/>
            <person name="Mayeda C.A."/>
            <person name="Meyerowitz E.M."/>
        </authorList>
    </citation>
    <scope>NUCLEOTIDE SEQUENCE [GENOMIC DNA]</scope>
</reference>
<reference key="2">
    <citation type="journal article" date="2007" name="Nature">
        <title>Evolution of genes and genomes on the Drosophila phylogeny.</title>
        <authorList>
            <consortium name="Drosophila 12 genomes consortium"/>
        </authorList>
    </citation>
    <scope>NUCLEOTIDE SEQUENCE [LARGE SCALE GENOMIC DNA]</scope>
    <source>
        <strain>Tucson 14021-0224.01</strain>
    </source>
</reference>
<dbReference type="EMBL" id="M14652">
    <property type="status" value="NOT_ANNOTATED_CDS"/>
    <property type="molecule type" value="Genomic_DNA"/>
</dbReference>
<dbReference type="EMBL" id="CH954178">
    <property type="protein sequence ID" value="EDV51420.1"/>
    <property type="molecule type" value="Genomic_DNA"/>
</dbReference>
<dbReference type="PIR" id="S01359">
    <property type="entry name" value="S01359"/>
</dbReference>
<dbReference type="EnsemblMetazoa" id="FBtr0135564">
    <property type="protein sequence ID" value="FBpp0134056"/>
    <property type="gene ID" value="FBgn0012268"/>
</dbReference>
<dbReference type="EnsemblMetazoa" id="XM_001972358.3">
    <property type="protein sequence ID" value="XP_001972394.1"/>
    <property type="gene ID" value="LOC6544456"/>
</dbReference>
<dbReference type="GeneID" id="6544456"/>
<dbReference type="KEGG" id="der:6544456"/>
<dbReference type="CTD" id="39288"/>
<dbReference type="eggNOG" id="ENOG502TF7P">
    <property type="taxonomic scope" value="Eukaryota"/>
</dbReference>
<dbReference type="HOGENOM" id="CLU_834891_0_0_1"/>
<dbReference type="OMA" id="MKTTVAC"/>
<dbReference type="OrthoDB" id="7831733at2759"/>
<dbReference type="ChiTaRS" id="Sgs3">
    <property type="organism name" value="fly"/>
</dbReference>
<dbReference type="Proteomes" id="UP000008711">
    <property type="component" value="Unassembled WGS sequence"/>
</dbReference>
<dbReference type="GO" id="GO:0005576">
    <property type="term" value="C:extracellular region"/>
    <property type="evidence" value="ECO:0007669"/>
    <property type="project" value="EnsemblMetazoa"/>
</dbReference>
<dbReference type="GO" id="GO:0007594">
    <property type="term" value="P:puparial adhesion"/>
    <property type="evidence" value="ECO:0007669"/>
    <property type="project" value="EnsemblMetazoa"/>
</dbReference>
<evidence type="ECO:0000256" key="1">
    <source>
        <dbReference type="SAM" id="MobiDB-lite"/>
    </source>
</evidence>
<keyword id="KW-0677">Repeat</keyword>
<keyword id="KW-0732">Signal</keyword>
<organism>
    <name type="scientific">Drosophila erecta</name>
    <name type="common">Fruit fly</name>
    <dbReference type="NCBI Taxonomy" id="7220"/>
    <lineage>
        <taxon>Eukaryota</taxon>
        <taxon>Metazoa</taxon>
        <taxon>Ecdysozoa</taxon>
        <taxon>Arthropoda</taxon>
        <taxon>Hexapoda</taxon>
        <taxon>Insecta</taxon>
        <taxon>Pterygota</taxon>
        <taxon>Neoptera</taxon>
        <taxon>Endopterygota</taxon>
        <taxon>Diptera</taxon>
        <taxon>Brachycera</taxon>
        <taxon>Muscomorpha</taxon>
        <taxon>Ephydroidea</taxon>
        <taxon>Drosophilidae</taxon>
        <taxon>Drosophila</taxon>
        <taxon>Sophophora</taxon>
    </lineage>
</organism>
<sequence>MKLTIATALVGILLIACAHVANGSDCGCPKRTTPKPCTTARPTCAPVTTTTCRPPTTTRCPPPTTTRCPPPTRPAECTATTKRPTARPTTKRATTRRTTVRATTKRATTRRTTKRATTRRTTVRATTKRATTRRTTTKRAPTRRATTKRATTRRNPTRRTTTRRAPTKRATTKRATTRRNPTKRKTTRRTTVRATKTTKRATTKRAPTKRATTKRAPTKRATTKRAPTKRATTKRAPTKRATTKRAPTKRATTKRAPTKRATTKRAPTKRATTKRATARPTSKPCGCKPCGPGGEPCQGCAKRDALCQDLNNILRNLERKVRQCVCGEPQWLL</sequence>
<proteinExistence type="evidence at transcript level"/>
<name>SGS3_DROER</name>
<gene>
    <name type="primary">Sgs3</name>
    <name type="ORF">GG15510</name>
</gene>
<feature type="signal peptide">
    <location>
        <begin position="1"/>
        <end position="23"/>
    </location>
</feature>
<feature type="chain" id="PRO_0000022328" description="Salivary glue protein Sgs-3">
    <location>
        <begin position="24"/>
        <end position="333"/>
    </location>
</feature>
<feature type="region of interest" description="Disordered" evidence="1">
    <location>
        <begin position="51"/>
        <end position="285"/>
    </location>
</feature>
<feature type="compositionally biased region" description="Pro residues" evidence="1">
    <location>
        <begin position="60"/>
        <end position="73"/>
    </location>
</feature>
<feature type="compositionally biased region" description="Low complexity" evidence="1">
    <location>
        <begin position="74"/>
        <end position="88"/>
    </location>
</feature>
<feature type="compositionally biased region" description="Basic residues" evidence="1">
    <location>
        <begin position="89"/>
        <end position="277"/>
    </location>
</feature>